<organism>
    <name type="scientific">Bacillus cereus (strain AH187)</name>
    <dbReference type="NCBI Taxonomy" id="405534"/>
    <lineage>
        <taxon>Bacteria</taxon>
        <taxon>Bacillati</taxon>
        <taxon>Bacillota</taxon>
        <taxon>Bacilli</taxon>
        <taxon>Bacillales</taxon>
        <taxon>Bacillaceae</taxon>
        <taxon>Bacillus</taxon>
        <taxon>Bacillus cereus group</taxon>
    </lineage>
</organism>
<comment type="function">
    <text evidence="1">Involved in control of chromosome replication initiation. Inhibits the cooperative binding of DnaA to the oriC region, thus negatively regulating initiation of chromosome replication. Inhibits the ability of DnaA-ATP to form a helix on DNA; does not disassemble preformed DnaA-DNA helices. Decreases the residence time of DnaA on the chromosome at its binding sites (oriC, replication forks and promoter-binding sites). Tethers DnaA to the replication machinery via the DNA polymerase beta sliding clamp subunit (dnaN). Associates with oriC and other DnaA targets on the chromosome in a DnaA-dependent manner.</text>
</comment>
<comment type="cofactor">
    <cofactor evidence="1">
        <name>Zn(2+)</name>
        <dbReference type="ChEBI" id="CHEBI:29105"/>
    </cofactor>
    <text evidence="1">Binds 1 zinc ion per subunit.</text>
</comment>
<comment type="subunit">
    <text evidence="1">Homotetramer. Interacts with both DnaA and DnaN, acting as a bridge between these two proteins.</text>
</comment>
<comment type="subcellular location">
    <subcellularLocation>
        <location evidence="1">Cytoplasm</location>
        <location evidence="1">Nucleoid</location>
    </subcellularLocation>
    <text evidence="1">Localizes in tight foci, which correspond to the replisome at mid-cell throughout the cell cycle.</text>
</comment>
<comment type="similarity">
    <text evidence="1">Belongs to the YabA family.</text>
</comment>
<proteinExistence type="inferred from homology"/>
<name>YABA_BACC7</name>
<feature type="chain" id="PRO_1000137832" description="Replication initiation control protein YabA">
    <location>
        <begin position="1"/>
        <end position="116"/>
    </location>
</feature>
<feature type="binding site" evidence="1">
    <location>
        <position position="91"/>
    </location>
    <ligand>
        <name>Zn(2+)</name>
        <dbReference type="ChEBI" id="CHEBI:29105"/>
    </ligand>
</feature>
<feature type="binding site" evidence="1">
    <location>
        <position position="93"/>
    </location>
    <ligand>
        <name>Zn(2+)</name>
        <dbReference type="ChEBI" id="CHEBI:29105"/>
    </ligand>
</feature>
<feature type="binding site" evidence="1">
    <location>
        <position position="106"/>
    </location>
    <ligand>
        <name>Zn(2+)</name>
        <dbReference type="ChEBI" id="CHEBI:29105"/>
    </ligand>
</feature>
<feature type="binding site" evidence="1">
    <location>
        <position position="109"/>
    </location>
    <ligand>
        <name>Zn(2+)</name>
        <dbReference type="ChEBI" id="CHEBI:29105"/>
    </ligand>
</feature>
<reference key="1">
    <citation type="submission" date="2008-10" db="EMBL/GenBank/DDBJ databases">
        <title>Genome sequence of Bacillus cereus AH187.</title>
        <authorList>
            <person name="Dodson R.J."/>
            <person name="Durkin A.S."/>
            <person name="Rosovitz M.J."/>
            <person name="Rasko D.A."/>
            <person name="Kolsto A.B."/>
            <person name="Okstad O.A."/>
            <person name="Ravel J."/>
            <person name="Sutton G."/>
        </authorList>
    </citation>
    <scope>NUCLEOTIDE SEQUENCE [LARGE SCALE GENOMIC DNA]</scope>
    <source>
        <strain>AH187</strain>
    </source>
</reference>
<evidence type="ECO:0000255" key="1">
    <source>
        <dbReference type="HAMAP-Rule" id="MF_01159"/>
    </source>
</evidence>
<protein>
    <recommendedName>
        <fullName evidence="1">Replication initiation control protein YabA</fullName>
    </recommendedName>
</protein>
<accession>B7HPU4</accession>
<gene>
    <name evidence="1" type="primary">yabA</name>
    <name type="ordered locus">BCAH187_A0042</name>
</gene>
<sequence length="116" mass="13766">MEKKDIFASVSSMEEQIGHLYKQLGELKQHLAELLEENQHIKMENENLRHRFEEVQIKEKQKTQKRKEVKPKTDIGEGYDNLARLYQEGFHICNLHYGSVRKEGDCLFCLSFLNKK</sequence>
<keyword id="KW-0963">Cytoplasm</keyword>
<keyword id="KW-0235">DNA replication</keyword>
<keyword id="KW-0236">DNA replication inhibitor</keyword>
<keyword id="KW-0479">Metal-binding</keyword>
<keyword id="KW-0862">Zinc</keyword>
<dbReference type="EMBL" id="CP001177">
    <property type="protein sequence ID" value="ACJ79111.1"/>
    <property type="molecule type" value="Genomic_DNA"/>
</dbReference>
<dbReference type="SMR" id="B7HPU4"/>
<dbReference type="KEGG" id="bcr:BCAH187_A0042"/>
<dbReference type="HOGENOM" id="CLU_157169_0_0_9"/>
<dbReference type="Proteomes" id="UP000002214">
    <property type="component" value="Chromosome"/>
</dbReference>
<dbReference type="GO" id="GO:0009295">
    <property type="term" value="C:nucleoid"/>
    <property type="evidence" value="ECO:0007669"/>
    <property type="project" value="UniProtKB-SubCell"/>
</dbReference>
<dbReference type="GO" id="GO:0006260">
    <property type="term" value="P:DNA replication"/>
    <property type="evidence" value="ECO:0007669"/>
    <property type="project" value="UniProtKB-UniRule"/>
</dbReference>
<dbReference type="Gene3D" id="1.20.5.1160">
    <property type="entry name" value="Vasodilator-stimulated phosphoprotein"/>
    <property type="match status" value="1"/>
</dbReference>
<dbReference type="HAMAP" id="MF_01159">
    <property type="entry name" value="YabA"/>
    <property type="match status" value="1"/>
</dbReference>
<dbReference type="InterPro" id="IPR010377">
    <property type="entry name" value="YabA"/>
</dbReference>
<dbReference type="NCBIfam" id="NF009644">
    <property type="entry name" value="PRK13169.1-5"/>
    <property type="match status" value="1"/>
</dbReference>
<dbReference type="Pfam" id="PF06156">
    <property type="entry name" value="YabA"/>
    <property type="match status" value="1"/>
</dbReference>
<dbReference type="PIRSF" id="PIRSF021439">
    <property type="entry name" value="DUF972"/>
    <property type="match status" value="1"/>
</dbReference>